<organism>
    <name type="scientific">Staphylococcus aureus (strain MW2)</name>
    <dbReference type="NCBI Taxonomy" id="196620"/>
    <lineage>
        <taxon>Bacteria</taxon>
        <taxon>Bacillati</taxon>
        <taxon>Bacillota</taxon>
        <taxon>Bacilli</taxon>
        <taxon>Bacillales</taxon>
        <taxon>Staphylococcaceae</taxon>
        <taxon>Staphylococcus</taxon>
    </lineage>
</organism>
<comment type="cofactor">
    <cofactor evidence="1">
        <name>Zn(2+)</name>
        <dbReference type="ChEBI" id="CHEBI:29105"/>
    </cofactor>
    <text evidence="1">Binds 2 Zn(2+) ions per subunit.</text>
</comment>
<comment type="similarity">
    <text evidence="2">Belongs to the peptidase M20A family.</text>
</comment>
<name>PEPVL_STAAW</name>
<dbReference type="EC" id="3.4.13.-"/>
<dbReference type="EMBL" id="BA000033">
    <property type="protein sequence ID" value="BAB95559.1"/>
    <property type="molecule type" value="Genomic_DNA"/>
</dbReference>
<dbReference type="SMR" id="Q8NW23"/>
<dbReference type="KEGG" id="sam:MW1694"/>
<dbReference type="HOGENOM" id="CLU_031786_2_0_9"/>
<dbReference type="GO" id="GO:0008777">
    <property type="term" value="F:acetylornithine deacetylase activity"/>
    <property type="evidence" value="ECO:0007669"/>
    <property type="project" value="TreeGrafter"/>
</dbReference>
<dbReference type="GO" id="GO:0016805">
    <property type="term" value="F:dipeptidase activity"/>
    <property type="evidence" value="ECO:0007669"/>
    <property type="project" value="UniProtKB-KW"/>
</dbReference>
<dbReference type="GO" id="GO:0008237">
    <property type="term" value="F:metallopeptidase activity"/>
    <property type="evidence" value="ECO:0007669"/>
    <property type="project" value="UniProtKB-KW"/>
</dbReference>
<dbReference type="GO" id="GO:0008270">
    <property type="term" value="F:zinc ion binding"/>
    <property type="evidence" value="ECO:0007669"/>
    <property type="project" value="InterPro"/>
</dbReference>
<dbReference type="GO" id="GO:0006526">
    <property type="term" value="P:L-arginine biosynthetic process"/>
    <property type="evidence" value="ECO:0007669"/>
    <property type="project" value="TreeGrafter"/>
</dbReference>
<dbReference type="GO" id="GO:0006508">
    <property type="term" value="P:proteolysis"/>
    <property type="evidence" value="ECO:0007669"/>
    <property type="project" value="UniProtKB-KW"/>
</dbReference>
<dbReference type="CDD" id="cd03888">
    <property type="entry name" value="M20_PepV"/>
    <property type="match status" value="1"/>
</dbReference>
<dbReference type="Gene3D" id="3.30.70.360">
    <property type="match status" value="2"/>
</dbReference>
<dbReference type="Gene3D" id="3.40.630.10">
    <property type="entry name" value="Zn peptidases"/>
    <property type="match status" value="1"/>
</dbReference>
<dbReference type="InterPro" id="IPR036264">
    <property type="entry name" value="Bact_exopeptidase_dim_dom"/>
</dbReference>
<dbReference type="InterPro" id="IPR010964">
    <property type="entry name" value="M20A_pepV-rel"/>
</dbReference>
<dbReference type="InterPro" id="IPR002933">
    <property type="entry name" value="Peptidase_M20"/>
</dbReference>
<dbReference type="InterPro" id="IPR050072">
    <property type="entry name" value="Peptidase_M20A"/>
</dbReference>
<dbReference type="NCBIfam" id="TIGR01887">
    <property type="entry name" value="dipeptidaselike"/>
    <property type="match status" value="1"/>
</dbReference>
<dbReference type="NCBIfam" id="NF005591">
    <property type="entry name" value="PRK07318.1"/>
    <property type="match status" value="1"/>
</dbReference>
<dbReference type="PANTHER" id="PTHR43808">
    <property type="entry name" value="ACETYLORNITHINE DEACETYLASE"/>
    <property type="match status" value="1"/>
</dbReference>
<dbReference type="PANTHER" id="PTHR43808:SF31">
    <property type="entry name" value="N-ACETYL-L-CITRULLINE DEACETYLASE"/>
    <property type="match status" value="1"/>
</dbReference>
<dbReference type="Pfam" id="PF01546">
    <property type="entry name" value="Peptidase_M20"/>
    <property type="match status" value="1"/>
</dbReference>
<dbReference type="SUPFAM" id="SSF55031">
    <property type="entry name" value="Bacterial exopeptidase dimerisation domain"/>
    <property type="match status" value="1"/>
</dbReference>
<dbReference type="SUPFAM" id="SSF53187">
    <property type="entry name" value="Zn-dependent exopeptidases"/>
    <property type="match status" value="1"/>
</dbReference>
<accession>Q8NW23</accession>
<proteinExistence type="inferred from homology"/>
<protein>
    <recommendedName>
        <fullName>Putative dipeptidase MW1694</fullName>
        <ecNumber>3.4.13.-</ecNumber>
    </recommendedName>
</protein>
<reference key="1">
    <citation type="journal article" date="2002" name="Lancet">
        <title>Genome and virulence determinants of high virulence community-acquired MRSA.</title>
        <authorList>
            <person name="Baba T."/>
            <person name="Takeuchi F."/>
            <person name="Kuroda M."/>
            <person name="Yuzawa H."/>
            <person name="Aoki K."/>
            <person name="Oguchi A."/>
            <person name="Nagai Y."/>
            <person name="Iwama N."/>
            <person name="Asano K."/>
            <person name="Naimi T."/>
            <person name="Kuroda H."/>
            <person name="Cui L."/>
            <person name="Yamamoto K."/>
            <person name="Hiramatsu K."/>
        </authorList>
    </citation>
    <scope>NUCLEOTIDE SEQUENCE [LARGE SCALE GENOMIC DNA]</scope>
    <source>
        <strain>MW2</strain>
    </source>
</reference>
<keyword id="KW-0224">Dipeptidase</keyword>
<keyword id="KW-0378">Hydrolase</keyword>
<keyword id="KW-0479">Metal-binding</keyword>
<keyword id="KW-0482">Metalloprotease</keyword>
<keyword id="KW-0645">Protease</keyword>
<keyword id="KW-0862">Zinc</keyword>
<sequence>MWKEKVQQYEDQIINDLKGLLAIESVRDDAKASEDAPVGPGPRKALDYMYEIAHRDGFTTHDVDHIAGRIEAGKGNDVLGILCHVDVVPAGDGWDSNPFEPVVTEDAIIARGTLDDKGPTIAAYYAIKILEDMNVDWKKRIHMIIGTDEESDWKCTDRYFKTEEMPTLGFAPDAEFPCIHGEKGITTFDLVQNKLAEDQDEPDYELITFKSGERYNMVPDHAEARVLVKENMTDVIQDFEYFLEQNHLQGDSTVDSGILVLTVEGKAVHGMDPSIGVNAGLYLLKFLASLNLDNNAQAFVAFSNRYLFDSDFGEKMGMKFHTDVMGDVTNNIGVITYDNENAGLFGINLRYPEGFEFEKAMDRFANEIQQYGFEVKLGKVQPPHYVDKNDPFVQKLVTAYRNQTNDMTEPYTIGGGTYARNLDKGVAFGAMFSDSEDLMHQKNEYITKKQLFNATSIYLEAIYSLCVEE</sequence>
<evidence type="ECO:0000250" key="1"/>
<evidence type="ECO:0000305" key="2"/>
<gene>
    <name type="ordered locus">MW1694</name>
</gene>
<feature type="chain" id="PRO_0000282633" description="Putative dipeptidase MW1694">
    <location>
        <begin position="1"/>
        <end position="469"/>
    </location>
</feature>
<feature type="active site" evidence="1">
    <location>
        <position position="86"/>
    </location>
</feature>
<feature type="active site" description="Proton acceptor" evidence="1">
    <location>
        <position position="149"/>
    </location>
</feature>
<feature type="binding site" evidence="1">
    <location>
        <position position="84"/>
    </location>
    <ligand>
        <name>Zn(2+)</name>
        <dbReference type="ChEBI" id="CHEBI:29105"/>
        <label>2</label>
    </ligand>
</feature>
<feature type="binding site" evidence="1">
    <location>
        <position position="115"/>
    </location>
    <ligand>
        <name>Zn(2+)</name>
        <dbReference type="ChEBI" id="CHEBI:29105"/>
        <label>1</label>
    </ligand>
</feature>
<feature type="binding site" evidence="1">
    <location>
        <position position="115"/>
    </location>
    <ligand>
        <name>Zn(2+)</name>
        <dbReference type="ChEBI" id="CHEBI:29105"/>
        <label>2</label>
    </ligand>
</feature>
<feature type="binding site" evidence="1">
    <location>
        <position position="150"/>
    </location>
    <ligand>
        <name>Zn(2+)</name>
        <dbReference type="ChEBI" id="CHEBI:29105"/>
        <label>1</label>
    </ligand>
</feature>
<feature type="binding site" evidence="1">
    <location>
        <position position="173"/>
    </location>
    <ligand>
        <name>Zn(2+)</name>
        <dbReference type="ChEBI" id="CHEBI:29105"/>
        <label>2</label>
    </ligand>
</feature>
<feature type="binding site" evidence="1">
    <location>
        <position position="440"/>
    </location>
    <ligand>
        <name>Zn(2+)</name>
        <dbReference type="ChEBI" id="CHEBI:29105"/>
        <label>1</label>
    </ligand>
</feature>